<reference key="1">
    <citation type="journal article" date="2003" name="J. Mol. Evol.">
        <title>Lineage-specific homogenization of the polyubiquitin gene among human and great apes.</title>
        <authorList>
            <person name="Tachikui H."/>
            <person name="Saitou N."/>
            <person name="Nakajima T."/>
            <person name="Hayasaka I."/>
            <person name="Ishida T."/>
            <person name="Inoue I."/>
        </authorList>
    </citation>
    <scope>NUCLEOTIDE SEQUENCE [GENOMIC DNA]</scope>
</reference>
<comment type="function">
    <molecule>Ubiquitin</molecule>
    <text evidence="2">Exists either covalently attached to another protein, or free (unanchored). When covalently bound, it is conjugated to target proteins via an isopeptide bond either as a monomer (monoubiquitin), a polymer linked via different Lys residues of the ubiquitin (polyubiquitin chains) or a linear polymer linked via the initiator Met of the ubiquitin (linear polyubiquitin chains). Polyubiquitin chains, when attached to a target protein, have different functions depending on the Lys residue of the ubiquitin that is linked: Lys-6-linked may be involved in DNA repair; Lys-11-linked is involved in ERAD (endoplasmic reticulum-associated degradation) and in cell-cycle regulation; Lys-29-linked is involved in proteotoxic stress response and cell cycle; Lys-33-linked is involved in kinase modification; Lys-48-linked is involved in protein degradation via the proteasome; Lys-63-linked is involved in endocytosis, DNA-damage responses as well as in signaling processes leading to activation of the transcription factor NF-kappa-B. Linear polymer chains formed via attachment by the initiator Met lead to cell signaling. Ubiquitin is usually conjugated to Lys residues of target proteins, however, in rare cases, conjugation to Cys or Ser residues has been observed. When polyubiquitin is free (unanchored-polyubiquitin), it also has distinct roles, such as in activation of protein kinases, and in signaling (By similarity). During ubiquitination, the acceptor ubiquitin is positioned in the active site via direct interaction with the E2 ubiquitin-conjugating enzymes such as UBE2R2 (By similarity). As a monoubiquitin, its C-terminal glycine is recognized as a C-degron by Cul2-RING (CRL2) E3 ubiquitin-protein ligase complexes (By similarity).</text>
</comment>
<comment type="subcellular location">
    <molecule>Ubiquitin</molecule>
    <subcellularLocation>
        <location evidence="1">Cytoplasm</location>
    </subcellularLocation>
    <subcellularLocation>
        <location evidence="1">Nucleus</location>
    </subcellularLocation>
    <subcellularLocation>
        <location evidence="2">Mitochondrion outer membrane</location>
        <topology evidence="2">Peripheral membrane protein</topology>
    </subcellularLocation>
</comment>
<comment type="PTM">
    <molecule>Ubiquitin</molecule>
    <text evidence="2">Phosphorylated at Ser-65 by PINK1 during mitophagy. Phosphorylated ubiquitin specifically binds and activates parkin (PRKN), triggering mitophagy. Phosphorylation does not affect E1-mediated E2 charging of ubiquitin but affects discharging of E2 enzymes to form polyubiquitin chains. It also affects deubiquitination by deubiquitinase enzymes such as USP30.</text>
</comment>
<comment type="PTM">
    <molecule>Ubiquitin</molecule>
    <text evidence="2">Mono-ADP-ribosylated at the C-terminus by PARP9, a component of the PPAR9-DTX3L complex. ADP-ribosylation requires processing by E1 and E2 enzymes and prevents ubiquitin conjugation to substrates such as histones.</text>
</comment>
<comment type="miscellaneous">
    <text>Ubiquitin is encoded by 4 different genes. UBA52 and RPS27A genes code for a single copy of ubiquitin fused to the ribosomal proteins eL40 and eS31, respectively. UBB and UBC genes code for a polyubiquitin precursor with exact head to tail repeats, the number of repeats differ between species and strains.</text>
</comment>
<comment type="miscellaneous">
    <text>For the sake of clarity sequence features are annotated only for the first chain, and are not repeated for each of the following chains.</text>
</comment>
<comment type="similarity">
    <text evidence="4">Belongs to the ubiquitin family.</text>
</comment>
<proteinExistence type="evidence at protein level"/>
<organism>
    <name type="scientific">Pan troglodytes</name>
    <name type="common">Chimpanzee</name>
    <dbReference type="NCBI Taxonomy" id="9598"/>
    <lineage>
        <taxon>Eukaryota</taxon>
        <taxon>Metazoa</taxon>
        <taxon>Chordata</taxon>
        <taxon>Craniata</taxon>
        <taxon>Vertebrata</taxon>
        <taxon>Euteleostomi</taxon>
        <taxon>Mammalia</taxon>
        <taxon>Eutheria</taxon>
        <taxon>Euarchontoglires</taxon>
        <taxon>Primates</taxon>
        <taxon>Haplorrhini</taxon>
        <taxon>Catarrhini</taxon>
        <taxon>Hominidae</taxon>
        <taxon>Pan</taxon>
    </lineage>
</organism>
<accession>P0CG64</accession>
<accession>Q867C3</accession>
<accession>Q867C7</accession>
<sequence length="761" mass="85585">MQIFVKTLTGKTITLEVEPSDTIENVKAKIQDKEGIPPDQQRLIFAGKQLEDGRTLSDYNIQKESTLHLVLRLRGGMQIFVKTLTGKTITLEVEPSDTIENVKAKIQDKEGIPPDQQRLIFAGKQLEDGRTLSDYNIQKESTLHLVLRLRGGMQIFVKTLTGKTITLEVEPSDTIENVKAKIQDKEGIPPDQQRLIFAGKQLEDGRTLSDYNIQKESTLHLVLRLRGGMQIFVKTLTGKTITLEVEPSDTIENVKAKIQDKEGIPPDQQRLIFAGKQLEDGRTLSDYNIQKESTLHLVLRLRGGMQIFVKTLTGKTITLEVEPSDTIENVKAKIQDKEGIPPDQQRLIFAGKQLEDGRTLSDYNIQKESTLHLVLRLRGGMQIFVKTLTGKTITLEVEPSDTIENVKAKIQDKEGIPPDQQRLIFAGKQLEDGRTLSDYNIQKESTLHLVLRLRGGMQIFVKTLTGKTITLEVEPSDTIENVKAKIQDKEGIPPDQQRLIFAGKQLEDGRTLSDYNIQKESTLHLVLRLRGGMQIFVKTLTGKTITLEVEPSDTIENVKAKIQDKEGIPPDQQRLIFAGKQLEDGRTLSDYNIQKESTLHLVLRLRGGMQIFVKTLTGKTITLEVEPSDTIENVKAKIQDKEGIPPDQQRLIFAGKQLEDGRTLSDYNIQKESTLHLVLRLRGGMQIFVKTLTGKTITLEVEPSDTIENVKAKIQDKEGIPPDQQRLIFAGKQLEDGRTLSDYNIQKESTLHLVLRLRGGV</sequence>
<dbReference type="EMBL" id="AB089614">
    <property type="protein sequence ID" value="BAC56952.1"/>
    <property type="molecule type" value="Genomic_DNA"/>
</dbReference>
<dbReference type="RefSeq" id="NP_001129078.1">
    <property type="nucleotide sequence ID" value="NM_001135606.1"/>
</dbReference>
<dbReference type="RefSeq" id="XP_024203360.2">
    <property type="nucleotide sequence ID" value="XM_024347592.3"/>
</dbReference>
<dbReference type="RefSeq" id="XP_024203362.2">
    <property type="nucleotide sequence ID" value="XM_024347594.3"/>
</dbReference>
<dbReference type="RefSeq" id="XP_063640927.1">
    <property type="nucleotide sequence ID" value="XM_063784857.1"/>
</dbReference>
<dbReference type="RefSeq" id="XP_063640928.1">
    <property type="nucleotide sequence ID" value="XM_063784858.1"/>
</dbReference>
<dbReference type="RefSeq" id="XP_063640929.1">
    <property type="nucleotide sequence ID" value="XM_063784859.1"/>
</dbReference>
<dbReference type="PDB" id="5OHM">
    <property type="method" value="X-ray"/>
    <property type="resolution" value="3.80 A"/>
    <property type="chains" value="A/C/E/G/I/K=1-76"/>
</dbReference>
<dbReference type="PDBsum" id="5OHM"/>
<dbReference type="SMR" id="P0CG64"/>
<dbReference type="FunCoup" id="P0CG64">
    <property type="interactions" value="1839"/>
</dbReference>
<dbReference type="STRING" id="9598.ENSPTRP00000050925"/>
<dbReference type="PaxDb" id="9598-ENSPTRP00000050925"/>
<dbReference type="ABCD" id="P0CG64">
    <property type="antibodies" value="2 sequenced antibodies"/>
</dbReference>
<dbReference type="GeneID" id="467151"/>
<dbReference type="KEGG" id="ptr:467151"/>
<dbReference type="CTD" id="7316"/>
<dbReference type="eggNOG" id="KOG0001">
    <property type="taxonomic scope" value="Eukaryota"/>
</dbReference>
<dbReference type="InParanoid" id="P0CG64"/>
<dbReference type="Proteomes" id="UP000002277">
    <property type="component" value="Unplaced"/>
</dbReference>
<dbReference type="GO" id="GO:0005737">
    <property type="term" value="C:cytoplasm"/>
    <property type="evidence" value="ECO:0000318"/>
    <property type="project" value="GO_Central"/>
</dbReference>
<dbReference type="GO" id="GO:0005741">
    <property type="term" value="C:mitochondrial outer membrane"/>
    <property type="evidence" value="ECO:0007669"/>
    <property type="project" value="UniProtKB-SubCell"/>
</dbReference>
<dbReference type="GO" id="GO:0005634">
    <property type="term" value="C:nucleus"/>
    <property type="evidence" value="ECO:0000318"/>
    <property type="project" value="GO_Central"/>
</dbReference>
<dbReference type="GO" id="GO:0031386">
    <property type="term" value="F:protein tag activity"/>
    <property type="evidence" value="ECO:0000318"/>
    <property type="project" value="GO_Central"/>
</dbReference>
<dbReference type="GO" id="GO:0031625">
    <property type="term" value="F:ubiquitin protein ligase binding"/>
    <property type="evidence" value="ECO:0000318"/>
    <property type="project" value="GO_Central"/>
</dbReference>
<dbReference type="GO" id="GO:0019941">
    <property type="term" value="P:modification-dependent protein catabolic process"/>
    <property type="evidence" value="ECO:0000318"/>
    <property type="project" value="GO_Central"/>
</dbReference>
<dbReference type="GO" id="GO:0016567">
    <property type="term" value="P:protein ubiquitination"/>
    <property type="evidence" value="ECO:0000318"/>
    <property type="project" value="GO_Central"/>
</dbReference>
<dbReference type="CDD" id="cd01803">
    <property type="entry name" value="Ubl_ubiquitin"/>
    <property type="match status" value="10"/>
</dbReference>
<dbReference type="FunFam" id="3.10.20.90:FF:000158">
    <property type="entry name" value="Polyubiquitin 5"/>
    <property type="match status" value="10"/>
</dbReference>
<dbReference type="Gene3D" id="3.10.20.90">
    <property type="entry name" value="Phosphatidylinositol 3-kinase Catalytic Subunit, Chain A, domain 1"/>
    <property type="match status" value="10"/>
</dbReference>
<dbReference type="InterPro" id="IPR000626">
    <property type="entry name" value="Ubiquitin-like_dom"/>
</dbReference>
<dbReference type="InterPro" id="IPR029071">
    <property type="entry name" value="Ubiquitin-like_domsf"/>
</dbReference>
<dbReference type="InterPro" id="IPR019954">
    <property type="entry name" value="Ubiquitin_CS"/>
</dbReference>
<dbReference type="InterPro" id="IPR019956">
    <property type="entry name" value="Ubiquitin_dom"/>
</dbReference>
<dbReference type="InterPro" id="IPR050158">
    <property type="entry name" value="Ubiquitin_ubiquitin-like"/>
</dbReference>
<dbReference type="PANTHER" id="PTHR10666">
    <property type="entry name" value="UBIQUITIN"/>
    <property type="match status" value="1"/>
</dbReference>
<dbReference type="Pfam" id="PF00240">
    <property type="entry name" value="ubiquitin"/>
    <property type="match status" value="10"/>
</dbReference>
<dbReference type="PRINTS" id="PR00348">
    <property type="entry name" value="UBIQUITIN"/>
</dbReference>
<dbReference type="SMART" id="SM00213">
    <property type="entry name" value="UBQ"/>
    <property type="match status" value="10"/>
</dbReference>
<dbReference type="SUPFAM" id="SSF54236">
    <property type="entry name" value="Ubiquitin-like"/>
    <property type="match status" value="10"/>
</dbReference>
<dbReference type="PROSITE" id="PS00299">
    <property type="entry name" value="UBIQUITIN_1"/>
    <property type="match status" value="10"/>
</dbReference>
<dbReference type="PROSITE" id="PS50053">
    <property type="entry name" value="UBIQUITIN_2"/>
    <property type="match status" value="10"/>
</dbReference>
<name>UBC_PANTR</name>
<protein>
    <recommendedName>
        <fullName>Polyubiquitin-C</fullName>
    </recommendedName>
    <component>
        <recommendedName>
            <fullName>Ubiquitin</fullName>
        </recommendedName>
    </component>
</protein>
<feature type="chain" id="PRO_0000396206" description="Ubiquitin">
    <location>
        <begin position="1"/>
        <end position="76"/>
    </location>
</feature>
<feature type="chain" id="PRO_0000396207" description="Ubiquitin">
    <location>
        <begin position="77"/>
        <end position="152"/>
    </location>
</feature>
<feature type="chain" id="PRO_0000396208" description="Ubiquitin">
    <location>
        <begin position="153"/>
        <end position="228"/>
    </location>
</feature>
<feature type="chain" id="PRO_0000396209" description="Ubiquitin">
    <location>
        <begin position="229"/>
        <end position="304"/>
    </location>
</feature>
<feature type="chain" id="PRO_0000396210" description="Ubiquitin">
    <location>
        <begin position="305"/>
        <end position="380"/>
    </location>
</feature>
<feature type="chain" id="PRO_0000396211" description="Ubiquitin">
    <location>
        <begin position="381"/>
        <end position="456"/>
    </location>
</feature>
<feature type="chain" id="PRO_0000396212" description="Ubiquitin">
    <location>
        <begin position="457"/>
        <end position="532"/>
    </location>
</feature>
<feature type="chain" id="PRO_0000396213" description="Ubiquitin">
    <location>
        <begin position="533"/>
        <end position="608"/>
    </location>
</feature>
<feature type="chain" id="PRO_0000396214" description="Ubiquitin">
    <location>
        <begin position="609"/>
        <end position="684"/>
    </location>
</feature>
<feature type="chain" id="PRO_0000396215" description="Ubiquitin">
    <location>
        <begin position="685"/>
        <end position="760"/>
    </location>
</feature>
<feature type="propeptide" id="PRO_0000396216">
    <location>
        <position position="761"/>
    </location>
</feature>
<feature type="domain" description="Ubiquitin-like 1" evidence="3">
    <location>
        <begin position="1"/>
        <end position="76"/>
    </location>
</feature>
<feature type="domain" description="Ubiquitin-like 2" evidence="3">
    <location>
        <begin position="77"/>
        <end position="152"/>
    </location>
</feature>
<feature type="domain" description="Ubiquitin-like 3" evidence="3">
    <location>
        <begin position="153"/>
        <end position="228"/>
    </location>
</feature>
<feature type="domain" description="Ubiquitin-like 4" evidence="3">
    <location>
        <begin position="229"/>
        <end position="304"/>
    </location>
</feature>
<feature type="domain" description="Ubiquitin-like 5" evidence="3">
    <location>
        <begin position="305"/>
        <end position="380"/>
    </location>
</feature>
<feature type="domain" description="Ubiquitin-like 6" evidence="3">
    <location>
        <begin position="381"/>
        <end position="456"/>
    </location>
</feature>
<feature type="domain" description="Ubiquitin-like 7" evidence="3">
    <location>
        <begin position="457"/>
        <end position="532"/>
    </location>
</feature>
<feature type="domain" description="Ubiquitin-like 8" evidence="3">
    <location>
        <begin position="533"/>
        <end position="608"/>
    </location>
</feature>
<feature type="domain" description="Ubiquitin-like 9" evidence="3">
    <location>
        <begin position="609"/>
        <end position="684"/>
    </location>
</feature>
<feature type="domain" description="Ubiquitin-like 10" evidence="3">
    <location>
        <begin position="685"/>
        <end position="760"/>
    </location>
</feature>
<feature type="site" description="Interacts with activating enzyme">
    <location>
        <position position="54"/>
    </location>
</feature>
<feature type="site" description="Essential for function">
    <location>
        <position position="68"/>
    </location>
</feature>
<feature type="site" description="Interacts with activating enzyme">
    <location>
        <position position="72"/>
    </location>
</feature>
<feature type="modified residue" description="Phosphoserine; by PINK1" evidence="2">
    <location>
        <position position="65"/>
    </location>
</feature>
<feature type="modified residue" description="ADP-ribosylglycine" evidence="2">
    <location>
        <position position="76"/>
    </location>
</feature>
<feature type="modified residue" description="Phosphoserine" evidence="2">
    <location>
        <position position="141"/>
    </location>
</feature>
<feature type="cross-link" description="Glycyl lysine isopeptide (Lys-Gly) (interchain with G-Cter in ubiquitin)" evidence="2">
    <location>
        <position position="6"/>
    </location>
</feature>
<feature type="cross-link" description="Glycyl lysine isopeptide (Lys-Gly) (interchain with G-Cter in ubiquitin)" evidence="2">
    <location>
        <position position="11"/>
    </location>
</feature>
<feature type="cross-link" description="Glycyl lysine isopeptide (Lys-Gly) (interchain with G-Cter in ubiquitin)" evidence="2">
    <location>
        <position position="27"/>
    </location>
</feature>
<feature type="cross-link" description="Glycyl lysine isopeptide (Lys-Gly) (interchain with G-Cter in ubiquitin)" evidence="2">
    <location>
        <position position="29"/>
    </location>
</feature>
<feature type="cross-link" description="Glycyl lysine isopeptide (Lys-Gly) (interchain with G-Cter in ubiquitin)" evidence="2">
    <location>
        <position position="33"/>
    </location>
</feature>
<feature type="cross-link" description="Glycyl lysine isopeptide (Lys-Gly) (interchain with G-Cter in ubiquitin)" evidence="2">
    <location>
        <position position="48"/>
    </location>
</feature>
<feature type="cross-link" description="Glycyl lysine isopeptide (Lys-Gly) (interchain with G-Cter in ubiquitin)" evidence="2">
    <location>
        <position position="63"/>
    </location>
</feature>
<feature type="cross-link" description="Glycyl lysine isopeptide (Gly-Lys) (interchain with K-? in acceptor proteins)" evidence="3">
    <location>
        <position position="76"/>
    </location>
</feature>
<evidence type="ECO:0000250" key="1"/>
<evidence type="ECO:0000250" key="2">
    <source>
        <dbReference type="UniProtKB" id="P0CG48"/>
    </source>
</evidence>
<evidence type="ECO:0000255" key="3">
    <source>
        <dbReference type="PROSITE-ProRule" id="PRU00214"/>
    </source>
</evidence>
<evidence type="ECO:0000305" key="4"/>
<keyword id="KW-0002">3D-structure</keyword>
<keyword id="KW-0013">ADP-ribosylation</keyword>
<keyword id="KW-0963">Cytoplasm</keyword>
<keyword id="KW-1017">Isopeptide bond</keyword>
<keyword id="KW-0472">Membrane</keyword>
<keyword id="KW-0496">Mitochondrion</keyword>
<keyword id="KW-1000">Mitochondrion outer membrane</keyword>
<keyword id="KW-0539">Nucleus</keyword>
<keyword id="KW-0597">Phosphoprotein</keyword>
<keyword id="KW-1185">Reference proteome</keyword>
<keyword id="KW-0677">Repeat</keyword>
<keyword id="KW-0832">Ubl conjugation</keyword>
<gene>
    <name type="primary">UBC</name>
</gene>